<feature type="chain" id="PRO_1000200725" description="Peptide deformylase">
    <location>
        <begin position="1"/>
        <end position="153"/>
    </location>
</feature>
<feature type="active site" evidence="1">
    <location>
        <position position="130"/>
    </location>
</feature>
<feature type="binding site" evidence="1">
    <location>
        <position position="87"/>
    </location>
    <ligand>
        <name>Fe cation</name>
        <dbReference type="ChEBI" id="CHEBI:24875"/>
    </ligand>
</feature>
<feature type="binding site" evidence="1">
    <location>
        <position position="129"/>
    </location>
    <ligand>
        <name>Fe cation</name>
        <dbReference type="ChEBI" id="CHEBI:24875"/>
    </ligand>
</feature>
<feature type="binding site" evidence="1">
    <location>
        <position position="133"/>
    </location>
    <ligand>
        <name>Fe cation</name>
        <dbReference type="ChEBI" id="CHEBI:24875"/>
    </ligand>
</feature>
<accession>B8E0X7</accession>
<name>DEF_DICTD</name>
<sequence>MIMEIRKIGDPILKIKAKKVEKIDEKVKNLVRDMIETMKFSNGVGLAAPQVGESLRIIVVDYEENPIAFINPEILEMDGEVLDYEGCLSVPGVEVPIKRAERIIFKAQDLQGRTKRYKAKGLLARVIQHEVDHLEGILILDRAVEESTLAEEK</sequence>
<organism>
    <name type="scientific">Dictyoglomus turgidum (strain DSM 6724 / Z-1310)</name>
    <dbReference type="NCBI Taxonomy" id="515635"/>
    <lineage>
        <taxon>Bacteria</taxon>
        <taxon>Pseudomonadati</taxon>
        <taxon>Dictyoglomota</taxon>
        <taxon>Dictyoglomia</taxon>
        <taxon>Dictyoglomales</taxon>
        <taxon>Dictyoglomaceae</taxon>
        <taxon>Dictyoglomus</taxon>
    </lineage>
</organism>
<proteinExistence type="inferred from homology"/>
<evidence type="ECO:0000255" key="1">
    <source>
        <dbReference type="HAMAP-Rule" id="MF_00163"/>
    </source>
</evidence>
<gene>
    <name evidence="1" type="primary">def</name>
    <name type="ordered locus">Dtur_1440</name>
</gene>
<comment type="function">
    <text evidence="1">Removes the formyl group from the N-terminal Met of newly synthesized proteins. Requires at least a dipeptide for an efficient rate of reaction. N-terminal L-methionine is a prerequisite for activity but the enzyme has broad specificity at other positions.</text>
</comment>
<comment type="catalytic activity">
    <reaction evidence="1">
        <text>N-terminal N-formyl-L-methionyl-[peptide] + H2O = N-terminal L-methionyl-[peptide] + formate</text>
        <dbReference type="Rhea" id="RHEA:24420"/>
        <dbReference type="Rhea" id="RHEA-COMP:10639"/>
        <dbReference type="Rhea" id="RHEA-COMP:10640"/>
        <dbReference type="ChEBI" id="CHEBI:15377"/>
        <dbReference type="ChEBI" id="CHEBI:15740"/>
        <dbReference type="ChEBI" id="CHEBI:49298"/>
        <dbReference type="ChEBI" id="CHEBI:64731"/>
        <dbReference type="EC" id="3.5.1.88"/>
    </reaction>
</comment>
<comment type="cofactor">
    <cofactor evidence="1">
        <name>Fe(2+)</name>
        <dbReference type="ChEBI" id="CHEBI:29033"/>
    </cofactor>
    <text evidence="1">Binds 1 Fe(2+) ion.</text>
</comment>
<comment type="similarity">
    <text evidence="1">Belongs to the polypeptide deformylase family.</text>
</comment>
<reference key="1">
    <citation type="journal article" date="2016" name="Front. Microbiol.">
        <title>The complete genome sequence of hyperthermophile Dictyoglomus turgidum DSM 6724 reveals a specialized carbohydrate fermentor.</title>
        <authorList>
            <person name="Brumm P.J."/>
            <person name="Gowda K."/>
            <person name="Robb F.T."/>
            <person name="Mead D.A."/>
        </authorList>
    </citation>
    <scope>NUCLEOTIDE SEQUENCE [LARGE SCALE GENOMIC DNA]</scope>
    <source>
        <strain>DSM 6724 / Z-1310</strain>
    </source>
</reference>
<protein>
    <recommendedName>
        <fullName evidence="1">Peptide deformylase</fullName>
        <shortName evidence="1">PDF</shortName>
        <ecNumber evidence="1">3.5.1.88</ecNumber>
    </recommendedName>
    <alternativeName>
        <fullName evidence="1">Polypeptide deformylase</fullName>
    </alternativeName>
</protein>
<keyword id="KW-0378">Hydrolase</keyword>
<keyword id="KW-0408">Iron</keyword>
<keyword id="KW-0479">Metal-binding</keyword>
<keyword id="KW-0648">Protein biosynthesis</keyword>
<keyword id="KW-1185">Reference proteome</keyword>
<dbReference type="EC" id="3.5.1.88" evidence="1"/>
<dbReference type="EMBL" id="CP001251">
    <property type="protein sequence ID" value="ACK42714.1"/>
    <property type="molecule type" value="Genomic_DNA"/>
</dbReference>
<dbReference type="RefSeq" id="YP_002353328.1">
    <property type="nucleotide sequence ID" value="NC_011661.1"/>
</dbReference>
<dbReference type="SMR" id="B8E0X7"/>
<dbReference type="FunCoup" id="B8E0X7">
    <property type="interactions" value="352"/>
</dbReference>
<dbReference type="STRING" id="515635.Dtur_1440"/>
<dbReference type="EnsemblBacteria" id="ACK42714">
    <property type="protein sequence ID" value="ACK42714"/>
    <property type="gene ID" value="Dtur_1440"/>
</dbReference>
<dbReference type="KEGG" id="dtu:Dtur_1440"/>
<dbReference type="PATRIC" id="fig|515635.4.peg.1487"/>
<dbReference type="eggNOG" id="COG0242">
    <property type="taxonomic scope" value="Bacteria"/>
</dbReference>
<dbReference type="HOGENOM" id="CLU_061901_4_2_0"/>
<dbReference type="InParanoid" id="B8E0X7"/>
<dbReference type="OrthoDB" id="9804313at2"/>
<dbReference type="Proteomes" id="UP000007719">
    <property type="component" value="Chromosome"/>
</dbReference>
<dbReference type="GO" id="GO:0046872">
    <property type="term" value="F:metal ion binding"/>
    <property type="evidence" value="ECO:0007669"/>
    <property type="project" value="UniProtKB-KW"/>
</dbReference>
<dbReference type="GO" id="GO:0042586">
    <property type="term" value="F:peptide deformylase activity"/>
    <property type="evidence" value="ECO:0000318"/>
    <property type="project" value="GO_Central"/>
</dbReference>
<dbReference type="GO" id="GO:0043686">
    <property type="term" value="P:co-translational protein modification"/>
    <property type="evidence" value="ECO:0000318"/>
    <property type="project" value="GO_Central"/>
</dbReference>
<dbReference type="GO" id="GO:0006412">
    <property type="term" value="P:translation"/>
    <property type="evidence" value="ECO:0007669"/>
    <property type="project" value="UniProtKB-UniRule"/>
</dbReference>
<dbReference type="CDD" id="cd00487">
    <property type="entry name" value="Pep_deformylase"/>
    <property type="match status" value="1"/>
</dbReference>
<dbReference type="Gene3D" id="3.90.45.10">
    <property type="entry name" value="Peptide deformylase"/>
    <property type="match status" value="1"/>
</dbReference>
<dbReference type="HAMAP" id="MF_00163">
    <property type="entry name" value="Pep_deformylase"/>
    <property type="match status" value="1"/>
</dbReference>
<dbReference type="InterPro" id="IPR023635">
    <property type="entry name" value="Peptide_deformylase"/>
</dbReference>
<dbReference type="InterPro" id="IPR036821">
    <property type="entry name" value="Peptide_deformylase_sf"/>
</dbReference>
<dbReference type="NCBIfam" id="TIGR00079">
    <property type="entry name" value="pept_deformyl"/>
    <property type="match status" value="1"/>
</dbReference>
<dbReference type="NCBIfam" id="NF001159">
    <property type="entry name" value="PRK00150.1-3"/>
    <property type="match status" value="1"/>
</dbReference>
<dbReference type="PANTHER" id="PTHR10458">
    <property type="entry name" value="PEPTIDE DEFORMYLASE"/>
    <property type="match status" value="1"/>
</dbReference>
<dbReference type="PANTHER" id="PTHR10458:SF22">
    <property type="entry name" value="PEPTIDE DEFORMYLASE"/>
    <property type="match status" value="1"/>
</dbReference>
<dbReference type="Pfam" id="PF01327">
    <property type="entry name" value="Pep_deformylase"/>
    <property type="match status" value="1"/>
</dbReference>
<dbReference type="PIRSF" id="PIRSF004749">
    <property type="entry name" value="Pep_def"/>
    <property type="match status" value="1"/>
</dbReference>
<dbReference type="PRINTS" id="PR01576">
    <property type="entry name" value="PDEFORMYLASE"/>
</dbReference>
<dbReference type="SUPFAM" id="SSF56420">
    <property type="entry name" value="Peptide deformylase"/>
    <property type="match status" value="1"/>
</dbReference>